<organism>
    <name type="scientific">Paramagnetospirillum magneticum (strain ATCC 700264 / AMB-1)</name>
    <name type="common">Magnetospirillum magneticum</name>
    <dbReference type="NCBI Taxonomy" id="342108"/>
    <lineage>
        <taxon>Bacteria</taxon>
        <taxon>Pseudomonadati</taxon>
        <taxon>Pseudomonadota</taxon>
        <taxon>Alphaproteobacteria</taxon>
        <taxon>Rhodospirillales</taxon>
        <taxon>Magnetospirillaceae</taxon>
        <taxon>Paramagnetospirillum</taxon>
    </lineage>
</organism>
<accession>Q2W8R7</accession>
<dbReference type="EMBL" id="AP007255">
    <property type="protein sequence ID" value="BAE49758.1"/>
    <property type="molecule type" value="Genomic_DNA"/>
</dbReference>
<dbReference type="RefSeq" id="WP_008620749.1">
    <property type="nucleotide sequence ID" value="NC_007626.1"/>
</dbReference>
<dbReference type="SMR" id="Q2W8R7"/>
<dbReference type="STRING" id="342108.amb0954"/>
<dbReference type="KEGG" id="mag:amb0954"/>
<dbReference type="HOGENOM" id="CLU_2260352_0_0_5"/>
<dbReference type="Proteomes" id="UP000007058">
    <property type="component" value="Chromosome"/>
</dbReference>
<dbReference type="GO" id="GO:0110146">
    <property type="term" value="C:magnetosome membrane"/>
    <property type="evidence" value="ECO:0000250"/>
    <property type="project" value="UniProtKB"/>
</dbReference>
<dbReference type="NCBIfam" id="NF040985">
    <property type="entry name" value="MamG"/>
    <property type="match status" value="1"/>
</dbReference>
<feature type="chain" id="PRO_0000447800" description="Magnetosome protein MamG">
    <location>
        <begin position="1"/>
        <end position="103"/>
    </location>
</feature>
<feature type="topological domain" description="Cytoplasmic" evidence="4">
    <location>
        <begin position="1"/>
        <end position="27"/>
    </location>
</feature>
<feature type="transmembrane region" description="Helical" evidence="2">
    <location>
        <begin position="28"/>
        <end position="48"/>
    </location>
</feature>
<feature type="topological domain" description="Lumenal" evidence="4">
    <location>
        <begin position="49"/>
        <end position="59"/>
    </location>
</feature>
<feature type="transmembrane region" description="Helical" evidence="2">
    <location>
        <begin position="60"/>
        <end position="80"/>
    </location>
</feature>
<feature type="topological domain" description="Cytoplasmic" evidence="4">
    <location>
        <begin position="81"/>
        <end position="103"/>
    </location>
</feature>
<feature type="region of interest" description="LG repeat" evidence="4">
    <location>
        <begin position="60"/>
        <end position="67"/>
    </location>
</feature>
<proteinExistence type="inferred from homology"/>
<comment type="function">
    <text evidence="1">Plays a role in regulating magnetite crystal size.</text>
</comment>
<comment type="subcellular location">
    <subcellularLocation>
        <location evidence="1">Magnetosome membrane</location>
        <topology evidence="2">Multi-pass membrane protein</topology>
    </subcellularLocation>
</comment>
<comment type="disruption phenotype">
    <text evidence="3">Deletion of the probable mamGFDC operon leads to a slight reduction in magnetic response and slightly narrower magnetite crystals.</text>
</comment>
<comment type="miscellaneous">
    <text evidence="4">This bacteria makes up to 20 cubo-octahedral magnetosomes of about 45 nm in diameter which contain membrane-bound crystals of magnetite (Fe(3)O(4)).</text>
</comment>
<comment type="similarity">
    <text evidence="4">Belongs to the magnetosome MamG (TC 9.B.95) protein family.</text>
</comment>
<gene>
    <name type="primary">mamG</name>
    <name type="ordered locus">amb0954</name>
</gene>
<evidence type="ECO:0000250" key="1">
    <source>
        <dbReference type="UniProtKB" id="Q6NE75"/>
    </source>
</evidence>
<evidence type="ECO:0000255" key="2"/>
<evidence type="ECO:0000269" key="3">
    <source>
    </source>
</evidence>
<evidence type="ECO:0000305" key="4"/>
<sequence length="103" mass="9269">MAAQVGGQILANAAAPAKASAAAGVGTGGAALGVGSGIIASPVGTAAIGNAMLTGKGVCLGLGLGLGAWGPVLVGIAGLAGAAYLVGKLKNCKAEVDAAADAT</sequence>
<reference key="1">
    <citation type="journal article" date="2005" name="DNA Res.">
        <title>Complete genome sequence of the facultative anaerobic magnetotactic bacterium Magnetospirillum sp. strain AMB-1.</title>
        <authorList>
            <person name="Matsunaga T."/>
            <person name="Okamura Y."/>
            <person name="Fukuda Y."/>
            <person name="Wahyudi A.T."/>
            <person name="Murase Y."/>
            <person name="Takeyama H."/>
        </authorList>
    </citation>
    <scope>NUCLEOTIDE SEQUENCE [LARGE SCALE GENOMIC DNA]</scope>
    <source>
        <strain>ATCC 700264 / AMB-1</strain>
    </source>
</reference>
<reference key="2">
    <citation type="journal article" date="2012" name="Mol. Microbiol.">
        <title>The magnetosome membrane protein, MmsF, is a major regulator of magnetite biomineralization in Magnetospirillum magneticum AMB-1.</title>
        <authorList>
            <person name="Murat D."/>
            <person name="Falahati V."/>
            <person name="Bertinetti L."/>
            <person name="Csencsits R."/>
            <person name="Koernig A."/>
            <person name="Downing K."/>
            <person name="Faivre D."/>
            <person name="Komeili A."/>
        </authorList>
    </citation>
    <scope>DISRUPTION PHENOTYPE</scope>
    <source>
        <strain>ATCC 700264 / AMB-1</strain>
    </source>
</reference>
<keyword id="KW-0091">Biomineralization</keyword>
<keyword id="KW-1281">Magnetosome</keyword>
<keyword id="KW-0472">Membrane</keyword>
<keyword id="KW-0812">Transmembrane</keyword>
<keyword id="KW-1133">Transmembrane helix</keyword>
<name>MAMG_PARM1</name>
<protein>
    <recommendedName>
        <fullName evidence="4">Magnetosome protein MamG</fullName>
    </recommendedName>
</protein>